<evidence type="ECO:0000250" key="1">
    <source>
        <dbReference type="UniProtKB" id="P03901"/>
    </source>
</evidence>
<evidence type="ECO:0000250" key="2">
    <source>
        <dbReference type="UniProtKB" id="P03902"/>
    </source>
</evidence>
<evidence type="ECO:0000255" key="3"/>
<evidence type="ECO:0000305" key="4"/>
<protein>
    <recommendedName>
        <fullName>NADH-ubiquinone oxidoreductase chain 4L</fullName>
        <ecNumber>7.1.1.2</ecNumber>
    </recommendedName>
    <alternativeName>
        <fullName>NADH dehydrogenase subunit 4L</fullName>
    </alternativeName>
</protein>
<proteinExistence type="inferred from homology"/>
<feature type="chain" id="PRO_0000274991" description="NADH-ubiquinone oxidoreductase chain 4L">
    <location>
        <begin position="1"/>
        <end position="98"/>
    </location>
</feature>
<feature type="transmembrane region" description="Helical" evidence="3">
    <location>
        <begin position="1"/>
        <end position="21"/>
    </location>
</feature>
<feature type="transmembrane region" description="Helical" evidence="3">
    <location>
        <begin position="26"/>
        <end position="46"/>
    </location>
</feature>
<feature type="transmembrane region" description="Helical" evidence="3">
    <location>
        <begin position="61"/>
        <end position="81"/>
    </location>
</feature>
<geneLocation type="mitochondrion"/>
<keyword id="KW-0249">Electron transport</keyword>
<keyword id="KW-0472">Membrane</keyword>
<keyword id="KW-0496">Mitochondrion</keyword>
<keyword id="KW-0999">Mitochondrion inner membrane</keyword>
<keyword id="KW-0520">NAD</keyword>
<keyword id="KW-1185">Reference proteome</keyword>
<keyword id="KW-0679">Respiratory chain</keyword>
<keyword id="KW-1278">Translocase</keyword>
<keyword id="KW-0812">Transmembrane</keyword>
<keyword id="KW-1133">Transmembrane helix</keyword>
<keyword id="KW-0813">Transport</keyword>
<keyword id="KW-0830">Ubiquinone</keyword>
<gene>
    <name type="primary">MT-ND4L</name>
    <name type="synonym">MTND4L</name>
    <name type="synonym">NADH4L</name>
    <name type="synonym">ND4L</name>
</gene>
<name>NU4LM_CHLSB</name>
<reference key="1">
    <citation type="submission" date="2005-05" db="EMBL/GenBank/DDBJ databases">
        <title>Complete mtDNA sequence of the green monkey.</title>
        <authorList>
            <person name="Wang Y."/>
        </authorList>
    </citation>
    <scope>NUCLEOTIDE SEQUENCE [GENOMIC DNA]</scope>
</reference>
<dbReference type="EC" id="7.1.1.2"/>
<dbReference type="EMBL" id="DQ069713">
    <property type="protein sequence ID" value="AAY66414.1"/>
    <property type="molecule type" value="Genomic_DNA"/>
</dbReference>
<dbReference type="RefSeq" id="YP_626428.1">
    <property type="nucleotide sequence ID" value="NC_008066.1"/>
</dbReference>
<dbReference type="SMR" id="Q1AL67"/>
<dbReference type="STRING" id="60711.ENSCSAP00000000009"/>
<dbReference type="Ensembl" id="ENSCSAT00000000027.1">
    <property type="protein sequence ID" value="ENSCSAP00000000009.1"/>
    <property type="gene ID" value="ENSCSAG00000000027.1"/>
</dbReference>
<dbReference type="GeneID" id="4097496"/>
<dbReference type="KEGG" id="csab:4097496"/>
<dbReference type="CTD" id="4539"/>
<dbReference type="eggNOG" id="KOG4669">
    <property type="taxonomic scope" value="Eukaryota"/>
</dbReference>
<dbReference type="GeneTree" id="ENSGT00390000004755"/>
<dbReference type="OMA" id="MYRSHLM"/>
<dbReference type="BioGRID-ORCS" id="4097496">
    <property type="hits" value="0 hits in 6 CRISPR screens"/>
</dbReference>
<dbReference type="Proteomes" id="UP000029965">
    <property type="component" value="Mitochondrion"/>
</dbReference>
<dbReference type="Bgee" id="ENSCSAG00000000027">
    <property type="expression patterns" value="Expressed in adrenal cortex and 7 other cell types or tissues"/>
</dbReference>
<dbReference type="GO" id="GO:0005743">
    <property type="term" value="C:mitochondrial inner membrane"/>
    <property type="evidence" value="ECO:0000250"/>
    <property type="project" value="UniProtKB"/>
</dbReference>
<dbReference type="GO" id="GO:0045271">
    <property type="term" value="C:respiratory chain complex I"/>
    <property type="evidence" value="ECO:0000250"/>
    <property type="project" value="UniProtKB"/>
</dbReference>
<dbReference type="GO" id="GO:0008137">
    <property type="term" value="F:NADH dehydrogenase (ubiquinone) activity"/>
    <property type="evidence" value="ECO:0000250"/>
    <property type="project" value="UniProtKB"/>
</dbReference>
<dbReference type="GO" id="GO:0042773">
    <property type="term" value="P:ATP synthesis coupled electron transport"/>
    <property type="evidence" value="ECO:0007669"/>
    <property type="project" value="InterPro"/>
</dbReference>
<dbReference type="FunFam" id="1.10.287.3510:FF:000002">
    <property type="entry name" value="NADH-ubiquinone oxidoreductase chain 4L"/>
    <property type="match status" value="1"/>
</dbReference>
<dbReference type="Gene3D" id="1.10.287.3510">
    <property type="match status" value="1"/>
</dbReference>
<dbReference type="InterPro" id="IPR001133">
    <property type="entry name" value="NADH_UbQ_OxRdtase_chain4L/K"/>
</dbReference>
<dbReference type="InterPro" id="IPR039428">
    <property type="entry name" value="NUOK/Mnh_C1-like"/>
</dbReference>
<dbReference type="PANTHER" id="PTHR11434:SF0">
    <property type="entry name" value="NADH-UBIQUINONE OXIDOREDUCTASE CHAIN 4L"/>
    <property type="match status" value="1"/>
</dbReference>
<dbReference type="PANTHER" id="PTHR11434">
    <property type="entry name" value="NADH-UBIQUINONE OXIDOREDUCTASE SUBUNIT ND4L"/>
    <property type="match status" value="1"/>
</dbReference>
<dbReference type="Pfam" id="PF00420">
    <property type="entry name" value="Oxidored_q2"/>
    <property type="match status" value="1"/>
</dbReference>
<comment type="function">
    <text evidence="1">Core subunit of the mitochondrial membrane respiratory chain NADH dehydrogenase (Complex I) which catalyzes electron transfer from NADH through the respiratory chain, using ubiquinone as an electron acceptor. Part of the enzyme membrane arm which is embedded in the lipid bilayer and involved in proton translocation.</text>
</comment>
<comment type="catalytic activity">
    <reaction evidence="1">
        <text>a ubiquinone + NADH + 5 H(+)(in) = a ubiquinol + NAD(+) + 4 H(+)(out)</text>
        <dbReference type="Rhea" id="RHEA:29091"/>
        <dbReference type="Rhea" id="RHEA-COMP:9565"/>
        <dbReference type="Rhea" id="RHEA-COMP:9566"/>
        <dbReference type="ChEBI" id="CHEBI:15378"/>
        <dbReference type="ChEBI" id="CHEBI:16389"/>
        <dbReference type="ChEBI" id="CHEBI:17976"/>
        <dbReference type="ChEBI" id="CHEBI:57540"/>
        <dbReference type="ChEBI" id="CHEBI:57945"/>
        <dbReference type="EC" id="7.1.1.2"/>
    </reaction>
    <physiologicalReaction direction="left-to-right" evidence="1">
        <dbReference type="Rhea" id="RHEA:29092"/>
    </physiologicalReaction>
</comment>
<comment type="subunit">
    <text evidence="2">Core subunit of respiratory chain NADH dehydrogenase (Complex I) which is composed of 45 different subunits.</text>
</comment>
<comment type="subcellular location">
    <subcellularLocation>
        <location evidence="2">Mitochondrion inner membrane</location>
        <topology evidence="3">Multi-pass membrane protein</topology>
    </subcellularLocation>
</comment>
<comment type="similarity">
    <text evidence="4">Belongs to the complex I subunit 4L family.</text>
</comment>
<sequence length="98" mass="10711">MSPIFMNITLAFTISLLGMLVYRSHLMASLLCLEGMMMSLFIMIALMASNAHSPLTNIMPIILLVFAACETAVGLALLVSISNTYGLDYIHNLNLLQC</sequence>
<organism>
    <name type="scientific">Chlorocebus sabaeus</name>
    <name type="common">Green monkey</name>
    <name type="synonym">Simia sabaea</name>
    <dbReference type="NCBI Taxonomy" id="60711"/>
    <lineage>
        <taxon>Eukaryota</taxon>
        <taxon>Metazoa</taxon>
        <taxon>Chordata</taxon>
        <taxon>Craniata</taxon>
        <taxon>Vertebrata</taxon>
        <taxon>Euteleostomi</taxon>
        <taxon>Mammalia</taxon>
        <taxon>Eutheria</taxon>
        <taxon>Euarchontoglires</taxon>
        <taxon>Primates</taxon>
        <taxon>Haplorrhini</taxon>
        <taxon>Catarrhini</taxon>
        <taxon>Cercopithecidae</taxon>
        <taxon>Cercopithecinae</taxon>
        <taxon>Chlorocebus</taxon>
    </lineage>
</organism>
<accession>Q1AL67</accession>